<gene>
    <name evidence="11" type="primary">DHRSX</name>
    <name type="synonym">CXorf11</name>
    <name type="synonym">DHRS5X</name>
    <name type="synonym">SDR46C1</name>
    <name type="synonym">SDR7C6</name>
    <name evidence="10" type="ORF">UNQ6508/PRO21433</name>
</gene>
<accession>Q8N5I4</accession>
<accession>Q6UWC7</accession>
<accession>Q8WUS4</accession>
<accession>Q96GR8</accession>
<accession>Q9NTF6</accession>
<dbReference type="EC" id="1.1.1.441" evidence="8"/>
<dbReference type="EMBL" id="AJ293620">
    <property type="protein sequence ID" value="CAC82170.1"/>
    <property type="molecule type" value="mRNA"/>
</dbReference>
<dbReference type="EMBL" id="AY358849">
    <property type="protein sequence ID" value="AAQ89208.1"/>
    <property type="molecule type" value="mRNA"/>
</dbReference>
<dbReference type="EMBL" id="AC079176">
    <property type="status" value="NOT_ANNOTATED_CDS"/>
    <property type="molecule type" value="Genomic_DNA"/>
</dbReference>
<dbReference type="EMBL" id="BX119919">
    <property type="status" value="NOT_ANNOTATED_CDS"/>
    <property type="molecule type" value="Genomic_DNA"/>
</dbReference>
<dbReference type="EMBL" id="BX649443">
    <property type="status" value="NOT_ANNOTATED_CDS"/>
    <property type="molecule type" value="Genomic_DNA"/>
</dbReference>
<dbReference type="EMBL" id="CR381696">
    <property type="status" value="NOT_ANNOTATED_CDS"/>
    <property type="molecule type" value="Genomic_DNA"/>
</dbReference>
<dbReference type="EMBL" id="CR856018">
    <property type="status" value="NOT_ANNOTATED_CDS"/>
    <property type="molecule type" value="Genomic_DNA"/>
</dbReference>
<dbReference type="EMBL" id="BC019696">
    <property type="protein sequence ID" value="AAH19696.2"/>
    <property type="status" value="ALT_SEQ"/>
    <property type="molecule type" value="mRNA"/>
</dbReference>
<dbReference type="EMBL" id="BC032340">
    <property type="protein sequence ID" value="AAH32340.1"/>
    <property type="molecule type" value="mRNA"/>
</dbReference>
<dbReference type="EMBL" id="AL137300">
    <property type="protein sequence ID" value="CAB70685.1"/>
    <property type="molecule type" value="mRNA"/>
</dbReference>
<dbReference type="CCDS" id="CCDS35195.1"/>
<dbReference type="PIR" id="T46363">
    <property type="entry name" value="T46363"/>
</dbReference>
<dbReference type="RefSeq" id="NP_660160.2">
    <property type="nucleotide sequence ID" value="NM_145177.3"/>
</dbReference>
<dbReference type="SMR" id="Q8N5I4"/>
<dbReference type="BioGRID" id="128508">
    <property type="interactions" value="23"/>
</dbReference>
<dbReference type="FunCoup" id="Q8N5I4">
    <property type="interactions" value="19"/>
</dbReference>
<dbReference type="IntAct" id="Q8N5I4">
    <property type="interactions" value="19"/>
</dbReference>
<dbReference type="STRING" id="9606.ENSP00000334113"/>
<dbReference type="GlyGen" id="Q8N5I4">
    <property type="glycosylation" value="1 site"/>
</dbReference>
<dbReference type="iPTMnet" id="Q8N5I4"/>
<dbReference type="PhosphoSitePlus" id="Q8N5I4"/>
<dbReference type="BioMuta" id="DHRSX"/>
<dbReference type="DMDM" id="229462837"/>
<dbReference type="jPOST" id="Q8N5I4"/>
<dbReference type="MassIVE" id="Q8N5I4"/>
<dbReference type="PaxDb" id="9606-ENSP00000334113"/>
<dbReference type="PeptideAtlas" id="Q8N5I4"/>
<dbReference type="ProteomicsDB" id="72063"/>
<dbReference type="Pumba" id="Q8N5I4"/>
<dbReference type="Antibodypedia" id="575">
    <property type="antibodies" value="106 antibodies from 21 providers"/>
</dbReference>
<dbReference type="DNASU" id="207063"/>
<dbReference type="Ensembl" id="ENST00000334651.11">
    <property type="protein sequence ID" value="ENSP00000334113.5"/>
    <property type="gene ID" value="ENSG00000169084.15"/>
</dbReference>
<dbReference type="Ensembl" id="ENST00000711204.1">
    <property type="protein sequence ID" value="ENSP00000518604.1"/>
    <property type="gene ID" value="ENSG00000292338.1"/>
</dbReference>
<dbReference type="GeneID" id="207063"/>
<dbReference type="KEGG" id="hsa:207063"/>
<dbReference type="MANE-Select" id="ENST00000334651.11">
    <property type="protein sequence ID" value="ENSP00000334113.5"/>
    <property type="RefSeq nucleotide sequence ID" value="NM_145177.3"/>
    <property type="RefSeq protein sequence ID" value="NP_660160.2"/>
</dbReference>
<dbReference type="UCSC" id="uc004cqf.5">
    <property type="organism name" value="human"/>
</dbReference>
<dbReference type="AGR" id="HGNC:18399"/>
<dbReference type="CTD" id="207063"/>
<dbReference type="DisGeNET" id="207063"/>
<dbReference type="GeneCards" id="DHRSX"/>
<dbReference type="HGNC" id="HGNC:18399">
    <property type="gene designation" value="DHRSX"/>
</dbReference>
<dbReference type="HPA" id="ENSG00000169084">
    <property type="expression patterns" value="Low tissue specificity"/>
</dbReference>
<dbReference type="MalaCards" id="DHRSX"/>
<dbReference type="MIM" id="301034">
    <property type="type" value="gene"/>
</dbReference>
<dbReference type="MIM" id="301133">
    <property type="type" value="phenotype"/>
</dbReference>
<dbReference type="MIM" id="400049">
    <property type="type" value="gene"/>
</dbReference>
<dbReference type="neXtProt" id="NX_Q8N5I4"/>
<dbReference type="OpenTargets" id="ENSG00000169084"/>
<dbReference type="PharmGKB" id="PA27330"/>
<dbReference type="VEuPathDB" id="HostDB:ENSG00000169084"/>
<dbReference type="eggNOG" id="KOG1208">
    <property type="taxonomic scope" value="Eukaryota"/>
</dbReference>
<dbReference type="GeneTree" id="ENSGT00940000162345"/>
<dbReference type="HOGENOM" id="CLU_010194_44_5_1"/>
<dbReference type="InParanoid" id="Q8N5I4"/>
<dbReference type="OMA" id="FTWFRYA"/>
<dbReference type="OrthoDB" id="191139at2759"/>
<dbReference type="PAN-GO" id="Q8N5I4">
    <property type="GO annotations" value="2 GO annotations based on evolutionary models"/>
</dbReference>
<dbReference type="PhylomeDB" id="Q8N5I4"/>
<dbReference type="TreeFam" id="TF105429"/>
<dbReference type="PathwayCommons" id="Q8N5I4"/>
<dbReference type="SignaLink" id="Q8N5I4"/>
<dbReference type="UniPathway" id="UPA00378"/>
<dbReference type="BioGRID-ORCS" id="207063">
    <property type="hits" value="52 hits in 628 CRISPR screens"/>
</dbReference>
<dbReference type="ChiTaRS" id="DHRSX">
    <property type="organism name" value="human"/>
</dbReference>
<dbReference type="GeneWiki" id="DHRSX"/>
<dbReference type="GenomeRNAi" id="207063"/>
<dbReference type="Pharos" id="Q8N5I4">
    <property type="development level" value="Tdark"/>
</dbReference>
<dbReference type="PRO" id="PR:Q8N5I4"/>
<dbReference type="Proteomes" id="UP000005640">
    <property type="component" value="Chromosome X"/>
</dbReference>
<dbReference type="Proteomes" id="UP000005640">
    <property type="component" value="Chromosome Y"/>
</dbReference>
<dbReference type="RNAct" id="Q8N5I4">
    <property type="molecule type" value="protein"/>
</dbReference>
<dbReference type="Bgee" id="ENSG00000169084">
    <property type="expression patterns" value="Expressed in stromal cell of endometrium and 137 other cell types or tissues"/>
</dbReference>
<dbReference type="ExpressionAtlas" id="Q8N5I4">
    <property type="expression patterns" value="baseline and differential"/>
</dbReference>
<dbReference type="GO" id="GO:0005576">
    <property type="term" value="C:extracellular region"/>
    <property type="evidence" value="ECO:0000314"/>
    <property type="project" value="UniProtKB"/>
</dbReference>
<dbReference type="GO" id="GO:0005811">
    <property type="term" value="C:lipid droplet"/>
    <property type="evidence" value="ECO:0000314"/>
    <property type="project" value="UniProtKB"/>
</dbReference>
<dbReference type="GO" id="GO:0160197">
    <property type="term" value="F:dolichal reductase [NAD(P)+] activity"/>
    <property type="evidence" value="ECO:0000314"/>
    <property type="project" value="UniProtKB"/>
</dbReference>
<dbReference type="GO" id="GO:0160196">
    <property type="term" value="F:polyprenol dehydrogenase activity"/>
    <property type="evidence" value="ECO:0000314"/>
    <property type="project" value="UniProtKB"/>
</dbReference>
<dbReference type="GO" id="GO:0019408">
    <property type="term" value="P:dolichol biosynthetic process"/>
    <property type="evidence" value="ECO:0000314"/>
    <property type="project" value="UniProtKB"/>
</dbReference>
<dbReference type="GO" id="GO:0010508">
    <property type="term" value="P:positive regulation of autophagy"/>
    <property type="evidence" value="ECO:0000315"/>
    <property type="project" value="UniProtKB"/>
</dbReference>
<dbReference type="CDD" id="cd05327">
    <property type="entry name" value="retinol-DH_like_SDR_c_like"/>
    <property type="match status" value="1"/>
</dbReference>
<dbReference type="FunFam" id="3.40.50.720:FF:000490">
    <property type="entry name" value="Dehydrogenase/reductase SDR family member on chromosome X"/>
    <property type="match status" value="1"/>
</dbReference>
<dbReference type="Gene3D" id="3.40.50.720">
    <property type="entry name" value="NAD(P)-binding Rossmann-like Domain"/>
    <property type="match status" value="1"/>
</dbReference>
<dbReference type="InterPro" id="IPR036291">
    <property type="entry name" value="NAD(P)-bd_dom_sf"/>
</dbReference>
<dbReference type="InterPro" id="IPR020904">
    <property type="entry name" value="Sc_DH/Rdtase_CS"/>
</dbReference>
<dbReference type="InterPro" id="IPR002347">
    <property type="entry name" value="SDR_fam"/>
</dbReference>
<dbReference type="PANTHER" id="PTHR24320:SF264">
    <property type="entry name" value="DEHYDROGENASE_REDUCTASE SDR FAMILY MEMBER ON CHROMOSOME X"/>
    <property type="match status" value="1"/>
</dbReference>
<dbReference type="PANTHER" id="PTHR24320">
    <property type="entry name" value="RETINOL DEHYDROGENASE"/>
    <property type="match status" value="1"/>
</dbReference>
<dbReference type="Pfam" id="PF00106">
    <property type="entry name" value="adh_short"/>
    <property type="match status" value="1"/>
</dbReference>
<dbReference type="PRINTS" id="PR00081">
    <property type="entry name" value="GDHRDH"/>
</dbReference>
<dbReference type="SUPFAM" id="SSF51735">
    <property type="entry name" value="NAD(P)-binding Rossmann-fold domains"/>
    <property type="match status" value="1"/>
</dbReference>
<dbReference type="PROSITE" id="PS00061">
    <property type="entry name" value="ADH_SHORT"/>
    <property type="match status" value="1"/>
</dbReference>
<protein>
    <recommendedName>
        <fullName evidence="12">Polyprenol dehydrogenase</fullName>
        <ecNumber evidence="8">1.1.1.441</ecNumber>
    </recommendedName>
    <alternativeName>
        <fullName evidence="9">DHRSXY</fullName>
    </alternativeName>
    <alternativeName>
        <fullName>Dehydrogenase/reductase SDR family member on chromosome X</fullName>
    </alternativeName>
    <alternativeName>
        <fullName evidence="12">Dolichal reductase</fullName>
    </alternativeName>
</protein>
<sequence length="330" mass="36443">MSPLSAARAALRVYAVGAAVILAQLLRRCRGGFLEPVFPPRPDRVAIVTGGTDGIGYSTAKHLARLGMHVIIAGNNDSKAKQVVSKIKEETLNDKVEFLYCDLASMTSIRQFVQKFKMKKIPLHVLINNAGVMMVPQRKTRDGFEEHFGLNYLGHFLLTNLLLDTLKESGSPGHSARVVTVSSATHYVAELNMDDLQSSACYSPHAAYAQSKLALVLFTYHLQRLLAAEGSHVTANVVDPGVVNTDVYKHVFWATRLAKKLLGWLLFKTPDEGAWTSIYAAVTPELEGVGGHYLYNEKETKSLHVTYNQKLQQQLWSKSCEMTGVLDVTL</sequence>
<feature type="initiator methionine" description="Removed" evidence="7">
    <location>
        <position position="1"/>
    </location>
</feature>
<feature type="chain" id="PRO_0000031974" description="Polyprenol dehydrogenase">
    <location>
        <begin position="2"/>
        <end position="330"/>
    </location>
</feature>
<feature type="active site" description="Proton acceptor" evidence="2">
    <location>
        <position position="208"/>
    </location>
</feature>
<feature type="binding site" evidence="1">
    <location>
        <position position="55"/>
    </location>
    <ligand>
        <name>NAD(+)</name>
        <dbReference type="ChEBI" id="CHEBI:57540"/>
    </ligand>
</feature>
<feature type="binding site" evidence="1">
    <location>
        <position position="208"/>
    </location>
    <ligand>
        <name>NAD(+)</name>
        <dbReference type="ChEBI" id="CHEBI:57540"/>
    </ligand>
</feature>
<feature type="binding site" evidence="1">
    <location>
        <position position="212"/>
    </location>
    <ligand>
        <name>NAD(+)</name>
        <dbReference type="ChEBI" id="CHEBI:57540"/>
    </ligand>
</feature>
<feature type="binding site" evidence="1">
    <location>
        <position position="245"/>
    </location>
    <ligand>
        <name>NAD(+)</name>
        <dbReference type="ChEBI" id="CHEBI:57540"/>
    </ligand>
</feature>
<feature type="sequence variant" id="VAR_089724" description="In CDG1DD; uncertain significance." evidence="8">
    <original>T</original>
    <variation>M</variation>
    <location>
        <position position="49"/>
    </location>
</feature>
<feature type="sequence variant" id="VAR_089725" description="In CDG1DD; likely pathogenic." evidence="8">
    <original>V</original>
    <variation>F</variation>
    <location>
        <position position="181"/>
    </location>
</feature>
<feature type="sequence variant" id="VAR_089726" description="In CDG1DD; likely pathogenic." evidence="8">
    <original>L</original>
    <variation>F</variation>
    <location>
        <position position="215"/>
    </location>
</feature>
<feature type="sequence variant" id="VAR_055354" description="In dbSNP:rs1127915." evidence="3 5 6">
    <original>V</original>
    <variation>L</variation>
    <location>
        <position position="247"/>
    </location>
</feature>
<feature type="sequence variant" id="VAR_055355" description="In dbSNP:rs3210910." evidence="3 4 5 6">
    <original>H</original>
    <variation>R</variation>
    <location>
        <position position="292"/>
    </location>
</feature>
<feature type="sequence variant" id="VAR_016100" description="In dbSNP:rs12010." evidence="4 5">
    <original>E</original>
    <variation>K</variation>
    <location>
        <position position="297"/>
    </location>
</feature>
<comment type="function">
    <text evidence="7 8">Oxidoreductase that plays a key role in early steps of protein N-linked glycosylation by mediating two non-consecutive steps in dolichol biosynthesis (PubMed:38821050). Acts both as a NAD(+)-dependent dehydrogenase and as a NADPH-dependent reductase during the conversion of polyprenol into dolichol (PubMed:38821050). First catalyzes the NAD(+)-dependent dehydrogenation of polyprenol into polyprenal; polyprenal is then reduced into dolichal by SRD5A3 (PubMed:38821050). It then catalyzes the NADPH-dependent reduction of dolichal into dolichol (PubMed:38821050). May also acts as a positive regulator of starvation-induced autophagy (PubMed:25076851).</text>
</comment>
<comment type="catalytic activity">
    <reaction evidence="8">
        <text>a di-trans,poly-cis-polyprenol + NAD(+) = a di-trans,poly-cis-polyprenal + NADH + H(+)</text>
        <dbReference type="Rhea" id="RHEA:80719"/>
        <dbReference type="Rhea" id="RHEA-COMP:19496"/>
        <dbReference type="Rhea" id="RHEA-COMP:19536"/>
        <dbReference type="ChEBI" id="CHEBI:15378"/>
        <dbReference type="ChEBI" id="CHEBI:57540"/>
        <dbReference type="ChEBI" id="CHEBI:57945"/>
        <dbReference type="ChEBI" id="CHEBI:67132"/>
        <dbReference type="ChEBI" id="CHEBI:231623"/>
        <dbReference type="EC" id="1.1.1.441"/>
    </reaction>
    <physiologicalReaction direction="left-to-right" evidence="8">
        <dbReference type="Rhea" id="RHEA:80720"/>
    </physiologicalReaction>
</comment>
<comment type="catalytic activity">
    <reaction evidence="8">
        <text>a di-trans,poly-cis-polyprenol + NADP(+) = a di-trans,poly-cis-polyprenal + NADPH + H(+)</text>
        <dbReference type="Rhea" id="RHEA:80723"/>
        <dbReference type="Rhea" id="RHEA-COMP:19496"/>
        <dbReference type="Rhea" id="RHEA-COMP:19536"/>
        <dbReference type="ChEBI" id="CHEBI:15378"/>
        <dbReference type="ChEBI" id="CHEBI:57783"/>
        <dbReference type="ChEBI" id="CHEBI:58349"/>
        <dbReference type="ChEBI" id="CHEBI:67132"/>
        <dbReference type="ChEBI" id="CHEBI:231623"/>
        <dbReference type="EC" id="1.1.1.441"/>
    </reaction>
    <physiologicalReaction direction="left-to-right" evidence="8">
        <dbReference type="Rhea" id="RHEA:80724"/>
    </physiologicalReaction>
</comment>
<comment type="catalytic activity">
    <reaction evidence="8">
        <text>a di-trans,poly-cis-dolichol + NADP(+) = a di-trans,poly-cis-dolichal + NADPH + H(+)</text>
        <dbReference type="Rhea" id="RHEA:80731"/>
        <dbReference type="Rhea" id="RHEA-COMP:19495"/>
        <dbReference type="Rhea" id="RHEA-COMP:19537"/>
        <dbReference type="ChEBI" id="CHEBI:15378"/>
        <dbReference type="ChEBI" id="CHEBI:16091"/>
        <dbReference type="ChEBI" id="CHEBI:57783"/>
        <dbReference type="ChEBI" id="CHEBI:58349"/>
        <dbReference type="ChEBI" id="CHEBI:231637"/>
        <dbReference type="EC" id="1.1.1.441"/>
    </reaction>
    <physiologicalReaction direction="right-to-left" evidence="8">
        <dbReference type="Rhea" id="RHEA:80733"/>
    </physiologicalReaction>
</comment>
<comment type="catalytic activity">
    <reaction evidence="8">
        <text>a di-trans,poly-cis-dolichol + NAD(+) = a di-trans,poly-cis-dolichal + NADH + H(+)</text>
        <dbReference type="Rhea" id="RHEA:80735"/>
        <dbReference type="Rhea" id="RHEA-COMP:19495"/>
        <dbReference type="Rhea" id="RHEA-COMP:19537"/>
        <dbReference type="ChEBI" id="CHEBI:15378"/>
        <dbReference type="ChEBI" id="CHEBI:16091"/>
        <dbReference type="ChEBI" id="CHEBI:57540"/>
        <dbReference type="ChEBI" id="CHEBI:57945"/>
        <dbReference type="ChEBI" id="CHEBI:231637"/>
        <dbReference type="EC" id="1.1.1.441"/>
    </reaction>
    <physiologicalReaction direction="right-to-left" evidence="8">
        <dbReference type="Rhea" id="RHEA:80737"/>
    </physiologicalReaction>
</comment>
<comment type="biophysicochemical properties">
    <kinetics>
        <KM evidence="8">5.7 uM for polyprenol (with 1 mM of NAD(+))</KM>
        <KM evidence="8">9.3 uM for polyprenol (with 1 mM of NADP(+))</KM>
        <KM evidence="8">42 uM for NADP(+) (with 4 uM of polyprenol)</KM>
        <KM evidence="8">66 uM for NAD(+) (with 4 uM of polyprenol)</KM>
        <text evidence="8">kcat is 0.44 sec(-1) with polyprenol in presence of NAD(+) (PubMed:38821050). kcat is 0.49 sec(-1) with polyprenol in presence of NADP(+) (PubMed:38821050).</text>
    </kinetics>
</comment>
<comment type="pathway">
    <text evidence="8">Protein modification; protein glycosylation.</text>
</comment>
<comment type="interaction">
    <interactant intactId="EBI-3923585">
        <id>Q8N5I4</id>
    </interactant>
    <interactant intactId="EBI-1220105">
        <id>P02654</id>
        <label>APOC1</label>
    </interactant>
    <organismsDiffer>false</organismsDiffer>
    <experiments>3</experiments>
</comment>
<comment type="interaction">
    <interactant intactId="EBI-3923585">
        <id>Q8N5I4</id>
    </interactant>
    <interactant intactId="EBI-13059134">
        <id>Q13520</id>
        <label>AQP6</label>
    </interactant>
    <organismsDiffer>false</organismsDiffer>
    <experiments>3</experiments>
</comment>
<comment type="interaction">
    <interactant intactId="EBI-3923585">
        <id>Q8N5I4</id>
    </interactant>
    <interactant intactId="EBI-12092171">
        <id>Q12797-6</id>
        <label>ASPH</label>
    </interactant>
    <organismsDiffer>false</organismsDiffer>
    <experiments>3</experiments>
</comment>
<comment type="interaction">
    <interactant intactId="EBI-3923585">
        <id>Q8N5I4</id>
    </interactant>
    <interactant intactId="EBI-7062247">
        <id>Q9UHD4</id>
        <label>CIDEB</label>
    </interactant>
    <organismsDiffer>false</organismsDiffer>
    <experiments>3</experiments>
</comment>
<comment type="interaction">
    <interactant intactId="EBI-3923585">
        <id>Q8N5I4</id>
    </interactant>
    <interactant intactId="EBI-11522780">
        <id>Q96DZ9-2</id>
        <label>CMTM5</label>
    </interactant>
    <organismsDiffer>false</organismsDiffer>
    <experiments>3</experiments>
</comment>
<comment type="interaction">
    <interactant intactId="EBI-3923585">
        <id>Q8N5I4</id>
    </interactant>
    <interactant intactId="EBI-17548630">
        <id>Q9Y5Q0</id>
        <label>FADS3</label>
    </interactant>
    <organismsDiffer>false</organismsDiffer>
    <experiments>3</experiments>
</comment>
<comment type="interaction">
    <interactant intactId="EBI-3923585">
        <id>Q8N5I4</id>
    </interactant>
    <interactant intactId="EBI-1052304">
        <id>Q8NBQ5</id>
        <label>HSD17B11</label>
    </interactant>
    <organismsDiffer>false</organismsDiffer>
    <experiments>3</experiments>
</comment>
<comment type="interaction">
    <interactant intactId="EBI-3923585">
        <id>Q8N5I4</id>
    </interactant>
    <interactant intactId="EBI-1050125">
        <id>O15173</id>
        <label>PGRMC2</label>
    </interactant>
    <organismsDiffer>false</organismsDiffer>
    <experiments>3</experiments>
</comment>
<comment type="interaction">
    <interactant intactId="EBI-3923585">
        <id>Q8N5I4</id>
    </interactant>
    <interactant intactId="EBI-17630288">
        <id>P57054</id>
        <label>PIGP</label>
    </interactant>
    <organismsDiffer>false</organismsDiffer>
    <experiments>3</experiments>
</comment>
<comment type="interaction">
    <interactant intactId="EBI-3923585">
        <id>Q8N5I4</id>
    </interactant>
    <interactant intactId="EBI-10192441">
        <id>Q86VR2</id>
        <label>RETREG3</label>
    </interactant>
    <organismsDiffer>false</organismsDiffer>
    <experiments>3</experiments>
</comment>
<comment type="interaction">
    <interactant intactId="EBI-3923585">
        <id>Q8N5I4</id>
    </interactant>
    <interactant intactId="EBI-8636004">
        <id>Q96GQ5</id>
        <label>RUSF1</label>
    </interactant>
    <organismsDiffer>false</organismsDiffer>
    <experiments>3</experiments>
</comment>
<comment type="interaction">
    <interactant intactId="EBI-3923585">
        <id>Q8N5I4</id>
    </interactant>
    <interactant intactId="EBI-12947623">
        <id>Q96MV1</id>
        <label>TLCD4</label>
    </interactant>
    <organismsDiffer>false</organismsDiffer>
    <experiments>3</experiments>
</comment>
<comment type="interaction">
    <interactant intactId="EBI-3923585">
        <id>Q8N5I4</id>
    </interactant>
    <interactant intactId="EBI-13342951">
        <id>Q96AN5</id>
        <label>TMEM143</label>
    </interactant>
    <organismsDiffer>false</organismsDiffer>
    <experiments>3</experiments>
</comment>
<comment type="interaction">
    <interactant intactId="EBI-3923585">
        <id>Q8N5I4</id>
    </interactant>
    <interactant intactId="EBI-8638294">
        <id>Q9NUH8</id>
        <label>TMEM14B</label>
    </interactant>
    <organismsDiffer>false</organismsDiffer>
    <experiments>3</experiments>
</comment>
<comment type="interaction">
    <interactant intactId="EBI-3923585">
        <id>Q8N5I4</id>
    </interactant>
    <interactant intactId="EBI-2548832">
        <id>Q8N661</id>
        <label>TMEM86B</label>
    </interactant>
    <organismsDiffer>false</organismsDiffer>
    <experiments>3</experiments>
</comment>
<comment type="interaction">
    <interactant intactId="EBI-3923585">
        <id>Q8N5I4</id>
    </interactant>
    <interactant intactId="EBI-740037">
        <id>O96006</id>
        <label>ZBED1</label>
    </interactant>
    <organismsDiffer>false</organismsDiffer>
    <experiments>3</experiments>
</comment>
<comment type="interaction">
    <interactant intactId="EBI-3923585">
        <id>Q8N5I4</id>
    </interactant>
    <interactant intactId="EBI-12837904">
        <id>Q96MV8</id>
        <label>ZDHHC15</label>
    </interactant>
    <organismsDiffer>false</organismsDiffer>
    <experiments>3</experiments>
</comment>
<comment type="subcellular location">
    <subcellularLocation>
        <location evidence="8">Lipid droplet</location>
    </subcellularLocation>
    <subcellularLocation>
        <location evidence="7">Secreted</location>
    </subcellularLocation>
    <text evidence="14">Secreted in a non-classical form; a signal peptide sequence at position 1-31 is predicted.</text>
</comment>
<comment type="tissue specificity">
    <text evidence="3 7">Widely expressed. Highly expressed in the pancreas.</text>
</comment>
<comment type="disease" evidence="8">
    <disease id="DI-06968">
        <name>Congenital disorder of glycosylation 1DD</name>
        <acronym>CDG1DD</acronym>
        <description>A form of congenital disorder of glycosylation, a multisystem disorder caused by a defect in glycoprotein biosynthesis and characterized by under-glycosylated serum glycoproteins. Congenital disorders of glycosylation result in a wide variety of clinical features, such as defects in the nervous system development, psychomotor retardation, dysmorphic features, hypotonia, coagulation disorders, and immunodeficiency. The broad spectrum of features reflects the critical role of N-glycoproteins during embryonic development, differentiation, and maintenance of cell functions. CDG1DD transmission pattern is consistent with pseudoautosomal recessive inheritance.</description>
        <dbReference type="MIM" id="301133"/>
    </disease>
    <text>The disease is caused by variants affecting the gene represented in this entry.</text>
</comment>
<comment type="miscellaneous">
    <text evidence="13">The gene coding for this protein is located in the pseudoautosomal region 1 (PAR1) of X and Y chromosomes.</text>
</comment>
<comment type="similarity">
    <text evidence="12">Belongs to the short-chain dehydrogenases/reductases (SDR) family.</text>
</comment>
<organism>
    <name type="scientific">Homo sapiens</name>
    <name type="common">Human</name>
    <dbReference type="NCBI Taxonomy" id="9606"/>
    <lineage>
        <taxon>Eukaryota</taxon>
        <taxon>Metazoa</taxon>
        <taxon>Chordata</taxon>
        <taxon>Craniata</taxon>
        <taxon>Vertebrata</taxon>
        <taxon>Euteleostomi</taxon>
        <taxon>Mammalia</taxon>
        <taxon>Eutheria</taxon>
        <taxon>Euarchontoglires</taxon>
        <taxon>Primates</taxon>
        <taxon>Haplorrhini</taxon>
        <taxon>Catarrhini</taxon>
        <taxon>Hominidae</taxon>
        <taxon>Homo</taxon>
    </lineage>
</organism>
<name>DHRSX_HUMAN</name>
<keyword id="KW-0900">Congenital disorder of glycosylation</keyword>
<keyword id="KW-0903">Direct protein sequencing</keyword>
<keyword id="KW-0225">Disease variant</keyword>
<keyword id="KW-0551">Lipid droplet</keyword>
<keyword id="KW-0520">NAD</keyword>
<keyword id="KW-0521">NADP</keyword>
<keyword id="KW-0560">Oxidoreductase</keyword>
<keyword id="KW-1267">Proteomics identification</keyword>
<keyword id="KW-1185">Reference proteome</keyword>
<keyword id="KW-0964">Secreted</keyword>
<reference key="1">
    <citation type="journal article" date="2001" name="Genome Res.">
        <title>Differential divergence of three human pseudoautosomal genes and their mouse homologs: implications for sex chromosome evolution.</title>
        <authorList>
            <person name="Gianfrancesco F."/>
            <person name="Sanges R."/>
            <person name="Esposito T."/>
            <person name="Tempesta S."/>
            <person name="Rao E."/>
            <person name="Rappold G."/>
            <person name="Archidiacono N."/>
            <person name="Graves J.A.M."/>
            <person name="Forabosco A."/>
            <person name="D'Urso M."/>
        </authorList>
    </citation>
    <scope>NUCLEOTIDE SEQUENCE [MRNA]</scope>
    <scope>TISSUE SPECIFICITY</scope>
    <scope>VARIANTS LEU-247 AND ARG-292</scope>
    <source>
        <tissue>Teratocarcinoma</tissue>
    </source>
</reference>
<reference key="2">
    <citation type="journal article" date="2003" name="Genome Res.">
        <title>The secreted protein discovery initiative (SPDI), a large-scale effort to identify novel human secreted and transmembrane proteins: a bioinformatics assessment.</title>
        <authorList>
            <person name="Clark H.F."/>
            <person name="Gurney A.L."/>
            <person name="Abaya E."/>
            <person name="Baker K."/>
            <person name="Baldwin D.T."/>
            <person name="Brush J."/>
            <person name="Chen J."/>
            <person name="Chow B."/>
            <person name="Chui C."/>
            <person name="Crowley C."/>
            <person name="Currell B."/>
            <person name="Deuel B."/>
            <person name="Dowd P."/>
            <person name="Eaton D."/>
            <person name="Foster J.S."/>
            <person name="Grimaldi C."/>
            <person name="Gu Q."/>
            <person name="Hass P.E."/>
            <person name="Heldens S."/>
            <person name="Huang A."/>
            <person name="Kim H.S."/>
            <person name="Klimowski L."/>
            <person name="Jin Y."/>
            <person name="Johnson S."/>
            <person name="Lee J."/>
            <person name="Lewis L."/>
            <person name="Liao D."/>
            <person name="Mark M.R."/>
            <person name="Robbie E."/>
            <person name="Sanchez C."/>
            <person name="Schoenfeld J."/>
            <person name="Seshagiri S."/>
            <person name="Simmons L."/>
            <person name="Singh J."/>
            <person name="Smith V."/>
            <person name="Stinson J."/>
            <person name="Vagts A."/>
            <person name="Vandlen R.L."/>
            <person name="Watanabe C."/>
            <person name="Wieand D."/>
            <person name="Woods K."/>
            <person name="Xie M.-H."/>
            <person name="Yansura D.G."/>
            <person name="Yi S."/>
            <person name="Yu G."/>
            <person name="Yuan J."/>
            <person name="Zhang M."/>
            <person name="Zhang Z."/>
            <person name="Goddard A.D."/>
            <person name="Wood W.I."/>
            <person name="Godowski P.J."/>
            <person name="Gray A.M."/>
        </authorList>
    </citation>
    <scope>NUCLEOTIDE SEQUENCE [LARGE SCALE MRNA]</scope>
    <scope>VARIANTS ARG-292 AND LYS-297</scope>
</reference>
<reference key="3">
    <citation type="journal article" date="2005" name="Nature">
        <title>The DNA sequence of the human X chromosome.</title>
        <authorList>
            <person name="Ross M.T."/>
            <person name="Grafham D.V."/>
            <person name="Coffey A.J."/>
            <person name="Scherer S."/>
            <person name="McLay K."/>
            <person name="Muzny D."/>
            <person name="Platzer M."/>
            <person name="Howell G.R."/>
            <person name="Burrows C."/>
            <person name="Bird C.P."/>
            <person name="Frankish A."/>
            <person name="Lovell F.L."/>
            <person name="Howe K.L."/>
            <person name="Ashurst J.L."/>
            <person name="Fulton R.S."/>
            <person name="Sudbrak R."/>
            <person name="Wen G."/>
            <person name="Jones M.C."/>
            <person name="Hurles M.E."/>
            <person name="Andrews T.D."/>
            <person name="Scott C.E."/>
            <person name="Searle S."/>
            <person name="Ramser J."/>
            <person name="Whittaker A."/>
            <person name="Deadman R."/>
            <person name="Carter N.P."/>
            <person name="Hunt S.E."/>
            <person name="Chen R."/>
            <person name="Cree A."/>
            <person name="Gunaratne P."/>
            <person name="Havlak P."/>
            <person name="Hodgson A."/>
            <person name="Metzker M.L."/>
            <person name="Richards S."/>
            <person name="Scott G."/>
            <person name="Steffen D."/>
            <person name="Sodergren E."/>
            <person name="Wheeler D.A."/>
            <person name="Worley K.C."/>
            <person name="Ainscough R."/>
            <person name="Ambrose K.D."/>
            <person name="Ansari-Lari M.A."/>
            <person name="Aradhya S."/>
            <person name="Ashwell R.I."/>
            <person name="Babbage A.K."/>
            <person name="Bagguley C.L."/>
            <person name="Ballabio A."/>
            <person name="Banerjee R."/>
            <person name="Barker G.E."/>
            <person name="Barlow K.F."/>
            <person name="Barrett I.P."/>
            <person name="Bates K.N."/>
            <person name="Beare D.M."/>
            <person name="Beasley H."/>
            <person name="Beasley O."/>
            <person name="Beck A."/>
            <person name="Bethel G."/>
            <person name="Blechschmidt K."/>
            <person name="Brady N."/>
            <person name="Bray-Allen S."/>
            <person name="Bridgeman A.M."/>
            <person name="Brown A.J."/>
            <person name="Brown M.J."/>
            <person name="Bonnin D."/>
            <person name="Bruford E.A."/>
            <person name="Buhay C."/>
            <person name="Burch P."/>
            <person name="Burford D."/>
            <person name="Burgess J."/>
            <person name="Burrill W."/>
            <person name="Burton J."/>
            <person name="Bye J.M."/>
            <person name="Carder C."/>
            <person name="Carrel L."/>
            <person name="Chako J."/>
            <person name="Chapman J.C."/>
            <person name="Chavez D."/>
            <person name="Chen E."/>
            <person name="Chen G."/>
            <person name="Chen Y."/>
            <person name="Chen Z."/>
            <person name="Chinault C."/>
            <person name="Ciccodicola A."/>
            <person name="Clark S.Y."/>
            <person name="Clarke G."/>
            <person name="Clee C.M."/>
            <person name="Clegg S."/>
            <person name="Clerc-Blankenburg K."/>
            <person name="Clifford K."/>
            <person name="Cobley V."/>
            <person name="Cole C.G."/>
            <person name="Conquer J.S."/>
            <person name="Corby N."/>
            <person name="Connor R.E."/>
            <person name="David R."/>
            <person name="Davies J."/>
            <person name="Davis C."/>
            <person name="Davis J."/>
            <person name="Delgado O."/>
            <person name="Deshazo D."/>
            <person name="Dhami P."/>
            <person name="Ding Y."/>
            <person name="Dinh H."/>
            <person name="Dodsworth S."/>
            <person name="Draper H."/>
            <person name="Dugan-Rocha S."/>
            <person name="Dunham A."/>
            <person name="Dunn M."/>
            <person name="Durbin K.J."/>
            <person name="Dutta I."/>
            <person name="Eades T."/>
            <person name="Ellwood M."/>
            <person name="Emery-Cohen A."/>
            <person name="Errington H."/>
            <person name="Evans K.L."/>
            <person name="Faulkner L."/>
            <person name="Francis F."/>
            <person name="Frankland J."/>
            <person name="Fraser A.E."/>
            <person name="Galgoczy P."/>
            <person name="Gilbert J."/>
            <person name="Gill R."/>
            <person name="Gloeckner G."/>
            <person name="Gregory S.G."/>
            <person name="Gribble S."/>
            <person name="Griffiths C."/>
            <person name="Grocock R."/>
            <person name="Gu Y."/>
            <person name="Gwilliam R."/>
            <person name="Hamilton C."/>
            <person name="Hart E.A."/>
            <person name="Hawes A."/>
            <person name="Heath P.D."/>
            <person name="Heitmann K."/>
            <person name="Hennig S."/>
            <person name="Hernandez J."/>
            <person name="Hinzmann B."/>
            <person name="Ho S."/>
            <person name="Hoffs M."/>
            <person name="Howden P.J."/>
            <person name="Huckle E.J."/>
            <person name="Hume J."/>
            <person name="Hunt P.J."/>
            <person name="Hunt A.R."/>
            <person name="Isherwood J."/>
            <person name="Jacob L."/>
            <person name="Johnson D."/>
            <person name="Jones S."/>
            <person name="de Jong P.J."/>
            <person name="Joseph S.S."/>
            <person name="Keenan S."/>
            <person name="Kelly S."/>
            <person name="Kershaw J.K."/>
            <person name="Khan Z."/>
            <person name="Kioschis P."/>
            <person name="Klages S."/>
            <person name="Knights A.J."/>
            <person name="Kosiura A."/>
            <person name="Kovar-Smith C."/>
            <person name="Laird G.K."/>
            <person name="Langford C."/>
            <person name="Lawlor S."/>
            <person name="Leversha M."/>
            <person name="Lewis L."/>
            <person name="Liu W."/>
            <person name="Lloyd C."/>
            <person name="Lloyd D.M."/>
            <person name="Loulseged H."/>
            <person name="Loveland J.E."/>
            <person name="Lovell J.D."/>
            <person name="Lozado R."/>
            <person name="Lu J."/>
            <person name="Lyne R."/>
            <person name="Ma J."/>
            <person name="Maheshwari M."/>
            <person name="Matthews L.H."/>
            <person name="McDowall J."/>
            <person name="McLaren S."/>
            <person name="McMurray A."/>
            <person name="Meidl P."/>
            <person name="Meitinger T."/>
            <person name="Milne S."/>
            <person name="Miner G."/>
            <person name="Mistry S.L."/>
            <person name="Morgan M."/>
            <person name="Morris S."/>
            <person name="Mueller I."/>
            <person name="Mullikin J.C."/>
            <person name="Nguyen N."/>
            <person name="Nordsiek G."/>
            <person name="Nyakatura G."/>
            <person name="O'dell C.N."/>
            <person name="Okwuonu G."/>
            <person name="Palmer S."/>
            <person name="Pandian R."/>
            <person name="Parker D."/>
            <person name="Parrish J."/>
            <person name="Pasternak S."/>
            <person name="Patel D."/>
            <person name="Pearce A.V."/>
            <person name="Pearson D.M."/>
            <person name="Pelan S.E."/>
            <person name="Perez L."/>
            <person name="Porter K.M."/>
            <person name="Ramsey Y."/>
            <person name="Reichwald K."/>
            <person name="Rhodes S."/>
            <person name="Ridler K.A."/>
            <person name="Schlessinger D."/>
            <person name="Schueler M.G."/>
            <person name="Sehra H.K."/>
            <person name="Shaw-Smith C."/>
            <person name="Shen H."/>
            <person name="Sheridan E.M."/>
            <person name="Shownkeen R."/>
            <person name="Skuce C.D."/>
            <person name="Smith M.L."/>
            <person name="Sotheran E.C."/>
            <person name="Steingruber H.E."/>
            <person name="Steward C.A."/>
            <person name="Storey R."/>
            <person name="Swann R.M."/>
            <person name="Swarbreck D."/>
            <person name="Tabor P.E."/>
            <person name="Taudien S."/>
            <person name="Taylor T."/>
            <person name="Teague B."/>
            <person name="Thomas K."/>
            <person name="Thorpe A."/>
            <person name="Timms K."/>
            <person name="Tracey A."/>
            <person name="Trevanion S."/>
            <person name="Tromans A.C."/>
            <person name="d'Urso M."/>
            <person name="Verduzco D."/>
            <person name="Villasana D."/>
            <person name="Waldron L."/>
            <person name="Wall M."/>
            <person name="Wang Q."/>
            <person name="Warren J."/>
            <person name="Warry G.L."/>
            <person name="Wei X."/>
            <person name="West A."/>
            <person name="Whitehead S.L."/>
            <person name="Whiteley M.N."/>
            <person name="Wilkinson J.E."/>
            <person name="Willey D.L."/>
            <person name="Williams G."/>
            <person name="Williams L."/>
            <person name="Williamson A."/>
            <person name="Williamson H."/>
            <person name="Wilming L."/>
            <person name="Woodmansey R.L."/>
            <person name="Wray P.W."/>
            <person name="Yen J."/>
            <person name="Zhang J."/>
            <person name="Zhou J."/>
            <person name="Zoghbi H."/>
            <person name="Zorilla S."/>
            <person name="Buck D."/>
            <person name="Reinhardt R."/>
            <person name="Poustka A."/>
            <person name="Rosenthal A."/>
            <person name="Lehrach H."/>
            <person name="Meindl A."/>
            <person name="Minx P.J."/>
            <person name="Hillier L.W."/>
            <person name="Willard H.F."/>
            <person name="Wilson R.K."/>
            <person name="Waterston R.H."/>
            <person name="Rice C.M."/>
            <person name="Vaudin M."/>
            <person name="Coulson A."/>
            <person name="Nelson D.L."/>
            <person name="Weinstock G."/>
            <person name="Sulston J.E."/>
            <person name="Durbin R.M."/>
            <person name="Hubbard T."/>
            <person name="Gibbs R.A."/>
            <person name="Beck S."/>
            <person name="Rogers J."/>
            <person name="Bentley D.R."/>
        </authorList>
    </citation>
    <scope>NUCLEOTIDE SEQUENCE [LARGE SCALE GENOMIC DNA]</scope>
</reference>
<reference key="4">
    <citation type="journal article" date="2004" name="Genome Res.">
        <title>The status, quality, and expansion of the NIH full-length cDNA project: the Mammalian Gene Collection (MGC).</title>
        <authorList>
            <consortium name="The MGC Project Team"/>
        </authorList>
    </citation>
    <scope>NUCLEOTIDE SEQUENCE [LARGE SCALE MRNA]</scope>
    <scope>VARIANTS LEU-247; ARG-292 AND LYS-297</scope>
    <source>
        <tissue>Brain</tissue>
        <tissue>Duodenum</tissue>
        <tissue>Ovary</tissue>
    </source>
</reference>
<reference key="5">
    <citation type="journal article" date="2007" name="BMC Genomics">
        <title>The full-ORF clone resource of the German cDNA consortium.</title>
        <authorList>
            <person name="Bechtel S."/>
            <person name="Rosenfelder H."/>
            <person name="Duda A."/>
            <person name="Schmidt C.P."/>
            <person name="Ernst U."/>
            <person name="Wellenreuther R."/>
            <person name="Mehrle A."/>
            <person name="Schuster C."/>
            <person name="Bahr A."/>
            <person name="Bloecker H."/>
            <person name="Heubner D."/>
            <person name="Hoerlein A."/>
            <person name="Michel G."/>
            <person name="Wedler H."/>
            <person name="Koehrer K."/>
            <person name="Ottenwaelder B."/>
            <person name="Poustka A."/>
            <person name="Wiemann S."/>
            <person name="Schupp I."/>
        </authorList>
    </citation>
    <scope>NUCLEOTIDE SEQUENCE [LARGE SCALE MRNA] OF 127-330</scope>
    <scope>VARIANTS LEU-247 AND ARG-292</scope>
    <source>
        <tissue>Testis</tissue>
    </source>
</reference>
<reference key="6">
    <citation type="journal article" date="2014" name="Int. J. Med. Sci.">
        <title>DHRSX, a novel non-classical secretory protein associated with starvation induced autophagy.</title>
        <authorList>
            <person name="Zhang G."/>
            <person name="Luo Y."/>
            <person name="Li G."/>
            <person name="Wang L."/>
            <person name="Na D."/>
            <person name="Wu X."/>
            <person name="Zhang Y."/>
            <person name="Mo X."/>
            <person name="Wang L."/>
        </authorList>
    </citation>
    <scope>PROTEIN SEQUENCE OF 2-11</scope>
    <scope>FUNCTION</scope>
    <scope>SUBCELLULAR LOCATION</scope>
    <scope>TISSUE SPECIFICITY</scope>
</reference>
<reference key="7">
    <citation type="journal article" date="2024" name="Cell">
        <title>A pseudoautosomal glycosylation disorder prompts the revision of dolichol biosynthesis.</title>
        <authorList>
            <person name="Wilson M.P."/>
            <person name="Kentache T."/>
            <person name="Althoff C.R."/>
            <person name="Schulz C."/>
            <person name="de Bettignies G."/>
            <person name="Mateu Cabrera G."/>
            <person name="Cimbalistiene L."/>
            <person name="Burnyte B."/>
            <person name="Yoon G."/>
            <person name="Costain G."/>
            <person name="Vuillaumier-Barrot S."/>
            <person name="Cheillan D."/>
            <person name="Rymen D."/>
            <person name="Rychtarova L."/>
            <person name="Hansikova H."/>
            <person name="Bury M."/>
            <person name="Dewulf J.P."/>
            <person name="Caligiore F."/>
            <person name="Jaeken J."/>
            <person name="Cantagrel V."/>
            <person name="Van Schaftingen E."/>
            <person name="Matthijs G."/>
            <person name="Foulquier F."/>
            <person name="Bommer G.T."/>
        </authorList>
    </citation>
    <scope>VARIANTS CDG1DD MET-49; PHE-181 AND PHE-215</scope>
    <scope>INVOLVEMENT IN CDG1DD</scope>
    <scope>FUNCTION</scope>
    <scope>CATALYTIC ACTIVITY</scope>
    <scope>BIOPHYSICOCHEMICAL PROPERTIES</scope>
    <scope>PATHWAY</scope>
    <scope>SUBCELLULAR LOCATION</scope>
</reference>
<reference key="8">
    <citation type="journal article" date="2024" name="Cell">
        <authorList>
            <person name="Wilson M.P."/>
            <person name="Kentache T."/>
            <person name="Althoff C.R."/>
            <person name="Schulz C."/>
            <person name="de Bettignies G."/>
            <person name="Cabrera G.M."/>
            <person name="Cimbalistiene L."/>
            <person name="Burnyte B."/>
            <person name="Yoon G."/>
            <person name="Costain G."/>
            <person name="Vuillaumier-Barrot S."/>
            <person name="Cheillan D."/>
            <person name="Rymen D."/>
            <person name="Rychtarova L."/>
            <person name="Hansikova H."/>
            <person name="Bury M."/>
            <person name="Dewulf J.P."/>
            <person name="Caligiore F."/>
            <person name="Jaeken J."/>
            <person name="Cantagrel V."/>
            <person name="Van Schaftingen E."/>
            <person name="Matthijs G."/>
            <person name="Foulquier F."/>
            <person name="Bommer G.T."/>
        </authorList>
    </citation>
    <scope>ERRATUM OF PUBMED:38821050</scope>
</reference>
<evidence type="ECO:0000250" key="1">
    <source>
        <dbReference type="UniProtKB" id="Q99714"/>
    </source>
</evidence>
<evidence type="ECO:0000255" key="2">
    <source>
        <dbReference type="PROSITE-ProRule" id="PRU10001"/>
    </source>
</evidence>
<evidence type="ECO:0000269" key="3">
    <source>
    </source>
</evidence>
<evidence type="ECO:0000269" key="4">
    <source>
    </source>
</evidence>
<evidence type="ECO:0000269" key="5">
    <source>
    </source>
</evidence>
<evidence type="ECO:0000269" key="6">
    <source>
    </source>
</evidence>
<evidence type="ECO:0000269" key="7">
    <source>
    </source>
</evidence>
<evidence type="ECO:0000269" key="8">
    <source>
    </source>
</evidence>
<evidence type="ECO:0000303" key="9">
    <source>
    </source>
</evidence>
<evidence type="ECO:0000303" key="10">
    <source>
    </source>
</evidence>
<evidence type="ECO:0000303" key="11">
    <source>
    </source>
</evidence>
<evidence type="ECO:0000305" key="12"/>
<evidence type="ECO:0000305" key="13">
    <source>
    </source>
</evidence>
<evidence type="ECO:0000305" key="14">
    <source>
    </source>
</evidence>
<proteinExistence type="evidence at protein level"/>